<gene>
    <name evidence="1" type="primary">rplW</name>
    <name evidence="1" type="synonym">rpl23</name>
    <name type="ordered locus">CYB_2599</name>
</gene>
<organism>
    <name type="scientific">Synechococcus sp. (strain JA-2-3B'a(2-13))</name>
    <name type="common">Cyanobacteria bacterium Yellowstone B-Prime</name>
    <dbReference type="NCBI Taxonomy" id="321332"/>
    <lineage>
        <taxon>Bacteria</taxon>
        <taxon>Bacillati</taxon>
        <taxon>Cyanobacteriota</taxon>
        <taxon>Cyanophyceae</taxon>
        <taxon>Synechococcales</taxon>
        <taxon>Synechococcaceae</taxon>
        <taxon>Synechococcus</taxon>
    </lineage>
</organism>
<keyword id="KW-1185">Reference proteome</keyword>
<keyword id="KW-0687">Ribonucleoprotein</keyword>
<keyword id="KW-0689">Ribosomal protein</keyword>
<keyword id="KW-0694">RNA-binding</keyword>
<keyword id="KW-0699">rRNA-binding</keyword>
<name>RL23_SYNJB</name>
<dbReference type="EMBL" id="CP000240">
    <property type="protein sequence ID" value="ABD03529.1"/>
    <property type="molecule type" value="Genomic_DNA"/>
</dbReference>
<dbReference type="RefSeq" id="WP_011434154.1">
    <property type="nucleotide sequence ID" value="NC_007776.1"/>
</dbReference>
<dbReference type="SMR" id="Q2JIM5"/>
<dbReference type="STRING" id="321332.CYB_2599"/>
<dbReference type="KEGG" id="cyb:CYB_2599"/>
<dbReference type="eggNOG" id="COG0089">
    <property type="taxonomic scope" value="Bacteria"/>
</dbReference>
<dbReference type="HOGENOM" id="CLU_037562_3_2_3"/>
<dbReference type="OrthoDB" id="9793353at2"/>
<dbReference type="Proteomes" id="UP000001938">
    <property type="component" value="Chromosome"/>
</dbReference>
<dbReference type="GO" id="GO:1990904">
    <property type="term" value="C:ribonucleoprotein complex"/>
    <property type="evidence" value="ECO:0007669"/>
    <property type="project" value="UniProtKB-KW"/>
</dbReference>
<dbReference type="GO" id="GO:0005840">
    <property type="term" value="C:ribosome"/>
    <property type="evidence" value="ECO:0007669"/>
    <property type="project" value="UniProtKB-KW"/>
</dbReference>
<dbReference type="GO" id="GO:0019843">
    <property type="term" value="F:rRNA binding"/>
    <property type="evidence" value="ECO:0007669"/>
    <property type="project" value="UniProtKB-UniRule"/>
</dbReference>
<dbReference type="GO" id="GO:0003735">
    <property type="term" value="F:structural constituent of ribosome"/>
    <property type="evidence" value="ECO:0007669"/>
    <property type="project" value="InterPro"/>
</dbReference>
<dbReference type="GO" id="GO:0006412">
    <property type="term" value="P:translation"/>
    <property type="evidence" value="ECO:0007669"/>
    <property type="project" value="UniProtKB-UniRule"/>
</dbReference>
<dbReference type="FunFam" id="3.30.70.330:FF:000001">
    <property type="entry name" value="50S ribosomal protein L23"/>
    <property type="match status" value="1"/>
</dbReference>
<dbReference type="Gene3D" id="3.30.70.330">
    <property type="match status" value="1"/>
</dbReference>
<dbReference type="HAMAP" id="MF_01369_B">
    <property type="entry name" value="Ribosomal_uL23_B"/>
    <property type="match status" value="1"/>
</dbReference>
<dbReference type="InterPro" id="IPR012677">
    <property type="entry name" value="Nucleotide-bd_a/b_plait_sf"/>
</dbReference>
<dbReference type="InterPro" id="IPR013025">
    <property type="entry name" value="Ribosomal_uL23-like"/>
</dbReference>
<dbReference type="InterPro" id="IPR012678">
    <property type="entry name" value="Ribosomal_uL23/eL15/eS24_sf"/>
</dbReference>
<dbReference type="InterPro" id="IPR001014">
    <property type="entry name" value="Ribosomal_uL23_CS"/>
</dbReference>
<dbReference type="NCBIfam" id="NF004363">
    <property type="entry name" value="PRK05738.2-4"/>
    <property type="match status" value="1"/>
</dbReference>
<dbReference type="NCBIfam" id="NF004368">
    <property type="entry name" value="PRK05738.3-4"/>
    <property type="match status" value="1"/>
</dbReference>
<dbReference type="PANTHER" id="PTHR11620">
    <property type="entry name" value="60S RIBOSOMAL PROTEIN L23A"/>
    <property type="match status" value="1"/>
</dbReference>
<dbReference type="Pfam" id="PF00276">
    <property type="entry name" value="Ribosomal_L23"/>
    <property type="match status" value="1"/>
</dbReference>
<dbReference type="SUPFAM" id="SSF54189">
    <property type="entry name" value="Ribosomal proteins S24e, L23 and L15e"/>
    <property type="match status" value="1"/>
</dbReference>
<dbReference type="PROSITE" id="PS00050">
    <property type="entry name" value="RIBOSOMAL_L23"/>
    <property type="match status" value="1"/>
</dbReference>
<sequence>MTESKRILADVLLRPVITEKATALMEQRKYVFEVLPTATKPLIRAAVEEMFRVRVTSVNTLKPPRKQRRVGRFVGYRTRPKRAIVTLAEGDSITLFPDT</sequence>
<protein>
    <recommendedName>
        <fullName evidence="1">Large ribosomal subunit protein uL23</fullName>
    </recommendedName>
    <alternativeName>
        <fullName evidence="2">50S ribosomal protein L23</fullName>
    </alternativeName>
</protein>
<reference key="1">
    <citation type="journal article" date="2007" name="ISME J.">
        <title>Population level functional diversity in a microbial community revealed by comparative genomic and metagenomic analyses.</title>
        <authorList>
            <person name="Bhaya D."/>
            <person name="Grossman A.R."/>
            <person name="Steunou A.-S."/>
            <person name="Khuri N."/>
            <person name="Cohan F.M."/>
            <person name="Hamamura N."/>
            <person name="Melendrez M.C."/>
            <person name="Bateson M.M."/>
            <person name="Ward D.M."/>
            <person name="Heidelberg J.F."/>
        </authorList>
    </citation>
    <scope>NUCLEOTIDE SEQUENCE [LARGE SCALE GENOMIC DNA]</scope>
    <source>
        <strain>JA-2-3B'a(2-13)</strain>
    </source>
</reference>
<comment type="function">
    <text evidence="1">One of the early assembly proteins it binds 23S rRNA. One of the proteins that surrounds the polypeptide exit tunnel on the outside of the ribosome. Forms the main docking site for trigger factor binding to the ribosome.</text>
</comment>
<comment type="subunit">
    <text evidence="1">Part of the 50S ribosomal subunit. Contacts protein L29, and trigger factor when it is bound to the ribosome.</text>
</comment>
<comment type="similarity">
    <text evidence="1">Belongs to the universal ribosomal protein uL23 family.</text>
</comment>
<accession>Q2JIM5</accession>
<proteinExistence type="inferred from homology"/>
<feature type="chain" id="PRO_1000087237" description="Large ribosomal subunit protein uL23">
    <location>
        <begin position="1"/>
        <end position="99"/>
    </location>
</feature>
<evidence type="ECO:0000255" key="1">
    <source>
        <dbReference type="HAMAP-Rule" id="MF_01369"/>
    </source>
</evidence>
<evidence type="ECO:0000305" key="2"/>